<gene>
    <name type="primary">igf2bp3</name>
    <name type="synonym">dvr1rbp</name>
    <name type="synonym">vickz3</name>
</gene>
<name>IF2B3_DANRE</name>
<feature type="chain" id="PRO_0000282541" description="Insulin-like growth factor 2 mRNA-binding protein 3">
    <location>
        <begin position="1"/>
        <end position="582"/>
    </location>
</feature>
<feature type="domain" description="RRM 1" evidence="4">
    <location>
        <begin position="2"/>
        <end position="75"/>
    </location>
</feature>
<feature type="domain" description="RRM 2" evidence="4">
    <location>
        <begin position="81"/>
        <end position="156"/>
    </location>
</feature>
<feature type="domain" description="KH 1" evidence="3">
    <location>
        <begin position="194"/>
        <end position="259"/>
    </location>
</feature>
<feature type="domain" description="KH 2" evidence="3">
    <location>
        <begin position="275"/>
        <end position="342"/>
    </location>
</feature>
<feature type="domain" description="KH 3" evidence="3">
    <location>
        <begin position="408"/>
        <end position="473"/>
    </location>
</feature>
<feature type="domain" description="KH 4" evidence="3">
    <location>
        <begin position="490"/>
        <end position="556"/>
    </location>
</feature>
<feature type="region of interest" description="Disordered" evidence="5">
    <location>
        <begin position="164"/>
        <end position="190"/>
    </location>
</feature>
<feature type="region of interest" description="Disordered" evidence="5">
    <location>
        <begin position="562"/>
        <end position="582"/>
    </location>
</feature>
<feature type="modified residue" description="Phosphoserine" evidence="8">
    <location>
        <position position="182"/>
    </location>
</feature>
<protein>
    <recommendedName>
        <fullName>Insulin-like growth factor 2 mRNA-binding protein 3</fullName>
        <shortName>IGF2 mRNA-binding protein 3</shortName>
        <shortName>IMP-3</shortName>
    </recommendedName>
    <alternativeName>
        <fullName>Decapentaplegic and Vg-related 1 RNA-binding protein</fullName>
    </alternativeName>
    <alternativeName>
        <fullName>IGF-II mRNA-binding protein 3</fullName>
    </alternativeName>
    <alternativeName>
        <fullName>VICKZ family member 3</fullName>
    </alternativeName>
    <alternativeName>
        <fullName>Vg1 RNA-binding protein</fullName>
        <shortName>Vg1-RBP</shortName>
    </alternativeName>
</protein>
<proteinExistence type="evidence at protein level"/>
<keyword id="KW-0963">Cytoplasm</keyword>
<keyword id="KW-0509">mRNA transport</keyword>
<keyword id="KW-0539">Nucleus</keyword>
<keyword id="KW-0597">Phosphoprotein</keyword>
<keyword id="KW-1185">Reference proteome</keyword>
<keyword id="KW-0677">Repeat</keyword>
<keyword id="KW-0694">RNA-binding</keyword>
<keyword id="KW-0810">Translation regulation</keyword>
<keyword id="KW-0813">Transport</keyword>
<evidence type="ECO:0000250" key="1"/>
<evidence type="ECO:0000250" key="2">
    <source>
        <dbReference type="UniProtKB" id="O00425"/>
    </source>
</evidence>
<evidence type="ECO:0000255" key="3">
    <source>
        <dbReference type="PROSITE-ProRule" id="PRU00117"/>
    </source>
</evidence>
<evidence type="ECO:0000255" key="4">
    <source>
        <dbReference type="PROSITE-ProRule" id="PRU00176"/>
    </source>
</evidence>
<evidence type="ECO:0000256" key="5">
    <source>
        <dbReference type="SAM" id="MobiDB-lite"/>
    </source>
</evidence>
<evidence type="ECO:0000269" key="6">
    <source>
    </source>
</evidence>
<evidence type="ECO:0000269" key="7">
    <source>
    </source>
</evidence>
<evidence type="ECO:0000269" key="8">
    <source>
    </source>
</evidence>
<evidence type="ECO:0000305" key="9"/>
<reference key="1">
    <citation type="journal article" date="1999" name="Mech. Dev.">
        <title>Vg1 RBP intracellular distribution and evolutionarily conserved expression at multiple stages during development.</title>
        <authorList>
            <person name="Zhang Q."/>
            <person name="Yaniv K."/>
            <person name="Oberman F."/>
            <person name="Wolke U."/>
            <person name="Git A."/>
            <person name="Fromer M."/>
            <person name="Taylor W.L."/>
            <person name="Meyer D."/>
            <person name="Standart N."/>
            <person name="Raz E."/>
            <person name="Yisraeli J.K."/>
        </authorList>
    </citation>
    <scope>NUCLEOTIDE SEQUENCE [MRNA]</scope>
    <scope>SUBCELLULAR LOCATION</scope>
    <scope>DEVELOPMENTAL STAGE</scope>
</reference>
<reference key="2">
    <citation type="submission" date="2003-01" db="EMBL/GenBank/DDBJ databases">
        <authorList>
            <consortium name="NIH - Zebrafish Gene Collection (ZGC) project"/>
        </authorList>
    </citation>
    <scope>NUCLEOTIDE SEQUENCE [LARGE SCALE MRNA]</scope>
    <source>
        <strain>AB</strain>
    </source>
</reference>
<reference key="3">
    <citation type="journal article" date="2003" name="Development">
        <title>The RNA-binding protein Vg1 RBP is required for cell migration during early neural development.</title>
        <authorList>
            <person name="Yaniv K."/>
            <person name="Fainsod A."/>
            <person name="Kalcheim C."/>
            <person name="Yisraeli J.K."/>
        </authorList>
    </citation>
    <scope>FUNCTION</scope>
    <scope>DEVELOPMENTAL STAGE</scope>
</reference>
<reference key="4">
    <citation type="journal article" date="2005" name="Biol. Cell">
        <title>VICKZ proteins: a multi-talented family of regulatory RNA-binding proteins.</title>
        <authorList>
            <person name="Yisraeli J.K."/>
        </authorList>
    </citation>
    <scope>REVIEW</scope>
</reference>
<reference key="5">
    <citation type="journal article" date="2008" name="J. Proteome Res.">
        <title>Online automated in vivo zebrafish phosphoproteomics: from large-scale analysis down to a single embryo.</title>
        <authorList>
            <person name="Lemeer S."/>
            <person name="Pinkse M.W.H."/>
            <person name="Mohammed S."/>
            <person name="van Breukelen B."/>
            <person name="den Hertog J."/>
            <person name="Slijper M."/>
            <person name="Heck A.J.R."/>
        </authorList>
    </citation>
    <scope>PHOSPHORYLATION [LARGE SCALE ANALYSIS] AT SER-182</scope>
    <scope>IDENTIFICATION BY MASS SPECTROMETRY</scope>
    <source>
        <tissue>Embryo</tissue>
    </source>
</reference>
<organism>
    <name type="scientific">Danio rerio</name>
    <name type="common">Zebrafish</name>
    <name type="synonym">Brachydanio rerio</name>
    <dbReference type="NCBI Taxonomy" id="7955"/>
    <lineage>
        <taxon>Eukaryota</taxon>
        <taxon>Metazoa</taxon>
        <taxon>Chordata</taxon>
        <taxon>Craniata</taxon>
        <taxon>Vertebrata</taxon>
        <taxon>Euteleostomi</taxon>
        <taxon>Actinopterygii</taxon>
        <taxon>Neopterygii</taxon>
        <taxon>Teleostei</taxon>
        <taxon>Ostariophysi</taxon>
        <taxon>Cypriniformes</taxon>
        <taxon>Danionidae</taxon>
        <taxon>Danioninae</taxon>
        <taxon>Danio</taxon>
    </lineage>
</organism>
<comment type="function">
    <text evidence="2 7">RNA-binding factor that may recruit target transcripts to cytoplasmic protein-RNA complexes (mRNPs). This transcript 'caging' into mRNPs allows mRNA transport and transient storage. It also modulates the rate and location at which target transcripts encounter the translational apparatus and shields them from endonuclease attacks or microRNA-mediated degradation (By similarity). Preferentially binds to N6-methyladenosine (m6A)-containing mRNAs and increases their stability (By similarity). Involved in neuronal crest migration (PubMed:14522877).</text>
</comment>
<comment type="subunit">
    <text evidence="2">Homodimer and multimer.</text>
</comment>
<comment type="subcellular location">
    <subcellularLocation>
        <location evidence="6">Cytoplasm</location>
    </subcellularLocation>
    <subcellularLocation>
        <location evidence="1">Nucleus</location>
    </subcellularLocation>
    <subcellularLocation>
        <location evidence="2">Cytoplasm</location>
        <location evidence="2">P-body</location>
    </subcellularLocation>
    <subcellularLocation>
        <location evidence="2">Cytoplasm</location>
        <location evidence="2">Stress granule</location>
    </subcellularLocation>
    <text>Accumulates along the vegetal cortex as oogenesis progresses. Colocalizes to extended processes in migrating neuronal crest cells.</text>
</comment>
<comment type="developmental stage">
    <text evidence="6 7">Expressed in oocytes from stages I to III. Expressed in 8-cell embryo. Expressed in brain, eye, branchial arches and neural tube at 24 hours post-fertilization (hpf). Detected predominantly in the CNS, putative neural crest, the sensorial layer of the epidermal ectoderm and their derivatives until the tailbud stage.</text>
</comment>
<comment type="domain">
    <text evidence="2">All KH domains contribute binding to target mRNA. Domains KH3 and KH4 are the major RNA-binding modules, although KH1 and KH2 also contribute. They are also required for RNA-dependent homo- and heterooligomerization. The integrity of KH domains seems not to be required for localization to stress granules.</text>
</comment>
<comment type="similarity">
    <text evidence="9">Belongs to the RRM IMP/VICKZ family.</text>
</comment>
<accession>Q9PW80</accession>
<dbReference type="EMBL" id="AF161270">
    <property type="protein sequence ID" value="AAD45610.1"/>
    <property type="molecule type" value="mRNA"/>
</dbReference>
<dbReference type="EMBL" id="BC045873">
    <property type="protein sequence ID" value="AAH45873.1"/>
    <property type="molecule type" value="mRNA"/>
</dbReference>
<dbReference type="RefSeq" id="NP_571566.1">
    <property type="nucleotide sequence ID" value="NM_131491.2"/>
</dbReference>
<dbReference type="SMR" id="Q9PW80"/>
<dbReference type="BioGRID" id="78930">
    <property type="interactions" value="1"/>
</dbReference>
<dbReference type="FunCoup" id="Q9PW80">
    <property type="interactions" value="761"/>
</dbReference>
<dbReference type="STRING" id="7955.ENSDARP00000010878"/>
<dbReference type="iPTMnet" id="Q9PW80"/>
<dbReference type="PaxDb" id="7955-ENSDARP00000010878"/>
<dbReference type="DNASU" id="30967"/>
<dbReference type="Ensembl" id="ENSDART00000010140">
    <property type="protein sequence ID" value="ENSDARP00000010878"/>
    <property type="gene ID" value="ENSDARG00000010266"/>
</dbReference>
<dbReference type="GeneID" id="30967"/>
<dbReference type="KEGG" id="dre:30967"/>
<dbReference type="AGR" id="ZFIN:ZDB-GENE-000308-1"/>
<dbReference type="CTD" id="10643"/>
<dbReference type="ZFIN" id="ZDB-GENE-000308-1">
    <property type="gene designation" value="igf2bp3"/>
</dbReference>
<dbReference type="eggNOG" id="KOG2193">
    <property type="taxonomic scope" value="Eukaryota"/>
</dbReference>
<dbReference type="HOGENOM" id="CLU_020744_1_0_1"/>
<dbReference type="InParanoid" id="Q9PW80"/>
<dbReference type="OrthoDB" id="752362at2759"/>
<dbReference type="PhylomeDB" id="Q9PW80"/>
<dbReference type="TreeFam" id="TF320229"/>
<dbReference type="PRO" id="PR:Q9PW80"/>
<dbReference type="Proteomes" id="UP000000437">
    <property type="component" value="Chromosome 19"/>
</dbReference>
<dbReference type="Bgee" id="ENSDARG00000010266">
    <property type="expression patterns" value="Expressed in somite and 30 other cell types or tissues"/>
</dbReference>
<dbReference type="ExpressionAtlas" id="Q9PW80">
    <property type="expression patterns" value="baseline"/>
</dbReference>
<dbReference type="GO" id="GO:0005737">
    <property type="term" value="C:cytoplasm"/>
    <property type="evidence" value="ECO:0000318"/>
    <property type="project" value="GO_Central"/>
</dbReference>
<dbReference type="GO" id="GO:0010494">
    <property type="term" value="C:cytoplasmic stress granule"/>
    <property type="evidence" value="ECO:0000250"/>
    <property type="project" value="UniProtKB"/>
</dbReference>
<dbReference type="GO" id="GO:0005829">
    <property type="term" value="C:cytosol"/>
    <property type="evidence" value="ECO:0000318"/>
    <property type="project" value="GO_Central"/>
</dbReference>
<dbReference type="GO" id="GO:0005634">
    <property type="term" value="C:nucleus"/>
    <property type="evidence" value="ECO:0000318"/>
    <property type="project" value="GO_Central"/>
</dbReference>
<dbReference type="GO" id="GO:0000932">
    <property type="term" value="C:P-body"/>
    <property type="evidence" value="ECO:0000250"/>
    <property type="project" value="UniProtKB"/>
</dbReference>
<dbReference type="GO" id="GO:0003730">
    <property type="term" value="F:mRNA 3'-UTR binding"/>
    <property type="evidence" value="ECO:0000314"/>
    <property type="project" value="ZFIN"/>
</dbReference>
<dbReference type="GO" id="GO:0003729">
    <property type="term" value="F:mRNA binding"/>
    <property type="evidence" value="ECO:0000314"/>
    <property type="project" value="ZFIN"/>
</dbReference>
<dbReference type="GO" id="GO:1990247">
    <property type="term" value="F:N6-methyladenosine-containing RNA reader activity"/>
    <property type="evidence" value="ECO:0000250"/>
    <property type="project" value="UniProtKB"/>
</dbReference>
<dbReference type="GO" id="GO:0070934">
    <property type="term" value="P:CRD-mediated mRNA stabilization"/>
    <property type="evidence" value="ECO:0000250"/>
    <property type="project" value="UniProtKB"/>
</dbReference>
<dbReference type="GO" id="GO:0007281">
    <property type="term" value="P:germ cell development"/>
    <property type="evidence" value="ECO:0000315"/>
    <property type="project" value="ZFIN"/>
</dbReference>
<dbReference type="GO" id="GO:0008354">
    <property type="term" value="P:germ cell migration"/>
    <property type="evidence" value="ECO:0000315"/>
    <property type="project" value="ZFIN"/>
</dbReference>
<dbReference type="GO" id="GO:0051028">
    <property type="term" value="P:mRNA transport"/>
    <property type="evidence" value="ECO:0007669"/>
    <property type="project" value="UniProtKB-KW"/>
</dbReference>
<dbReference type="GO" id="GO:0007399">
    <property type="term" value="P:nervous system development"/>
    <property type="evidence" value="ECO:0000318"/>
    <property type="project" value="GO_Central"/>
</dbReference>
<dbReference type="GO" id="GO:0045995">
    <property type="term" value="P:regulation of embryonic development"/>
    <property type="evidence" value="ECO:0000315"/>
    <property type="project" value="ZFIN"/>
</dbReference>
<dbReference type="GO" id="GO:0006417">
    <property type="term" value="P:regulation of translation"/>
    <property type="evidence" value="ECO:0007669"/>
    <property type="project" value="UniProtKB-KW"/>
</dbReference>
<dbReference type="GO" id="GO:0007530">
    <property type="term" value="P:sex determination"/>
    <property type="evidence" value="ECO:0000315"/>
    <property type="project" value="ZFIN"/>
</dbReference>
<dbReference type="CDD" id="cd22498">
    <property type="entry name" value="KH-I_IGF2BP3_rpt3"/>
    <property type="match status" value="1"/>
</dbReference>
<dbReference type="CDD" id="cd12630">
    <property type="entry name" value="RRM2_IGF2BP3"/>
    <property type="match status" value="1"/>
</dbReference>
<dbReference type="FunFam" id="3.30.70.330:FF:000203">
    <property type="entry name" value="insulin-like growth factor 2 mRNA-binding protein 1"/>
    <property type="match status" value="1"/>
</dbReference>
<dbReference type="FunFam" id="3.30.310.210:FF:000001">
    <property type="entry name" value="insulin-like growth factor 2 mRNA-binding protein 1 isoform X1"/>
    <property type="match status" value="1"/>
</dbReference>
<dbReference type="FunFam" id="3.30.1370.10:FF:000026">
    <property type="entry name" value="Insulin-like growth factor 2 mRNA-binding protein 3"/>
    <property type="match status" value="1"/>
</dbReference>
<dbReference type="FunFam" id="3.30.1370.10:FF:000027">
    <property type="entry name" value="insulin-like growth factor 2 mRNA-binding protein 3 isoform X1"/>
    <property type="match status" value="1"/>
</dbReference>
<dbReference type="FunFam" id="3.30.70.330:FF:000099">
    <property type="entry name" value="insulin-like growth factor 2 mRNA-binding protein 3 isoform X1"/>
    <property type="match status" value="1"/>
</dbReference>
<dbReference type="Gene3D" id="3.30.310.210">
    <property type="match status" value="1"/>
</dbReference>
<dbReference type="Gene3D" id="3.30.70.330">
    <property type="match status" value="2"/>
</dbReference>
<dbReference type="Gene3D" id="3.30.1370.10">
    <property type="entry name" value="K Homology domain, type 1"/>
    <property type="match status" value="2"/>
</dbReference>
<dbReference type="InterPro" id="IPR004087">
    <property type="entry name" value="KH_dom"/>
</dbReference>
<dbReference type="InterPro" id="IPR004088">
    <property type="entry name" value="KH_dom_type_1"/>
</dbReference>
<dbReference type="InterPro" id="IPR036612">
    <property type="entry name" value="KH_dom_type_1_sf"/>
</dbReference>
<dbReference type="InterPro" id="IPR012677">
    <property type="entry name" value="Nucleotide-bd_a/b_plait_sf"/>
</dbReference>
<dbReference type="InterPro" id="IPR035979">
    <property type="entry name" value="RBD_domain_sf"/>
</dbReference>
<dbReference type="InterPro" id="IPR000504">
    <property type="entry name" value="RRM_dom"/>
</dbReference>
<dbReference type="PANTHER" id="PTHR10288">
    <property type="entry name" value="KH DOMAIN CONTAINING RNA BINDING PROTEIN"/>
    <property type="match status" value="1"/>
</dbReference>
<dbReference type="Pfam" id="PF00013">
    <property type="entry name" value="KH_1"/>
    <property type="match status" value="4"/>
</dbReference>
<dbReference type="Pfam" id="PF00076">
    <property type="entry name" value="RRM_1"/>
    <property type="match status" value="1"/>
</dbReference>
<dbReference type="SMART" id="SM00322">
    <property type="entry name" value="KH"/>
    <property type="match status" value="4"/>
</dbReference>
<dbReference type="SMART" id="SM00360">
    <property type="entry name" value="RRM"/>
    <property type="match status" value="2"/>
</dbReference>
<dbReference type="SUPFAM" id="SSF54791">
    <property type="entry name" value="Eukaryotic type KH-domain (KH-domain type I)"/>
    <property type="match status" value="4"/>
</dbReference>
<dbReference type="SUPFAM" id="SSF54928">
    <property type="entry name" value="RNA-binding domain, RBD"/>
    <property type="match status" value="1"/>
</dbReference>
<dbReference type="PROSITE" id="PS50084">
    <property type="entry name" value="KH_TYPE_1"/>
    <property type="match status" value="4"/>
</dbReference>
<dbReference type="PROSITE" id="PS50102">
    <property type="entry name" value="RRM"/>
    <property type="match status" value="2"/>
</dbReference>
<sequence>MNKLYIGNVSEQASALDLESIFEQWKIPFSAPFLVKSGYAFVDCPDEKVAMRAIDTLSGKVELHGKVLEVEHSVPKRQRSCKLQIRNIPPHMQWEVLDGLLAQYGTVESCEQVNTDTETAVVNVRYGAKDQAREAMDKLNGFLMENYALKVSYIPDETAAADAPAVGGRRGFNPRGPPRQGSPSLGARPKLQSDVPLRLLVPTQFVGAIIGKEGATIRNITKQTHSKIDIHRKENAGAAEKPITVHSTPEGCSSACRNIMEIMQKEAIDTKITEEIPLKILAHNNFVGRLIGKEGRNLKKIEQDTDTKITISPLQDLTLYNPERTITVKGTLDACAKAEEEIMKKVRESYENDVAAMHLQSNLIPGLNLNALGLFPGAASGGISPSVVSGPPPGAQAGYQSFGAQMESETVHLFIPALAVGAIIGKQGQHIKQLSRFAGASIKIAPADGIDAKQRMVIISGPPEAQFKAQGRIFGKLKEENFFGPKEEVKLEAHIKVPSFAAGRVIGKGGKTVNELQNLTSAEVVVPRDQTPDENDQVVVKITGHFYASQLAQRKIQEIISQVRRQQQPKPSAAGPPVARRK</sequence>